<accession>Q9JYH7</accession>
<organism>
    <name type="scientific">Neisseria meningitidis serogroup B (strain ATCC BAA-335 / MC58)</name>
    <dbReference type="NCBI Taxonomy" id="122586"/>
    <lineage>
        <taxon>Bacteria</taxon>
        <taxon>Pseudomonadati</taxon>
        <taxon>Pseudomonadota</taxon>
        <taxon>Betaproteobacteria</taxon>
        <taxon>Neisseriales</taxon>
        <taxon>Neisseriaceae</taxon>
        <taxon>Neisseria</taxon>
    </lineage>
</organism>
<dbReference type="EC" id="2.6.1.9" evidence="1"/>
<dbReference type="EMBL" id="AE002098">
    <property type="protein sequence ID" value="AAF41935.1"/>
    <property type="molecule type" value="Genomic_DNA"/>
</dbReference>
<dbReference type="PIR" id="F81067">
    <property type="entry name" value="F81067"/>
</dbReference>
<dbReference type="RefSeq" id="NP_274588.1">
    <property type="nucleotide sequence ID" value="NC_003112.2"/>
</dbReference>
<dbReference type="RefSeq" id="WP_002225029.1">
    <property type="nucleotide sequence ID" value="NC_003112.2"/>
</dbReference>
<dbReference type="SMR" id="Q9JYH7"/>
<dbReference type="FunCoup" id="Q9JYH7">
    <property type="interactions" value="444"/>
</dbReference>
<dbReference type="STRING" id="122586.NMB1582"/>
<dbReference type="PaxDb" id="122586-NMB1582"/>
<dbReference type="KEGG" id="nme:NMB1582"/>
<dbReference type="PATRIC" id="fig|122586.8.peg.2033"/>
<dbReference type="HOGENOM" id="CLU_017584_3_1_4"/>
<dbReference type="InParanoid" id="Q9JYH7"/>
<dbReference type="OrthoDB" id="9813612at2"/>
<dbReference type="UniPathway" id="UPA00031">
    <property type="reaction ID" value="UER00012"/>
</dbReference>
<dbReference type="Proteomes" id="UP000000425">
    <property type="component" value="Chromosome"/>
</dbReference>
<dbReference type="GO" id="GO:0004400">
    <property type="term" value="F:histidinol-phosphate transaminase activity"/>
    <property type="evidence" value="ECO:0007669"/>
    <property type="project" value="UniProtKB-UniRule"/>
</dbReference>
<dbReference type="GO" id="GO:0030170">
    <property type="term" value="F:pyridoxal phosphate binding"/>
    <property type="evidence" value="ECO:0007669"/>
    <property type="project" value="InterPro"/>
</dbReference>
<dbReference type="GO" id="GO:0000105">
    <property type="term" value="P:L-histidine biosynthetic process"/>
    <property type="evidence" value="ECO:0007669"/>
    <property type="project" value="UniProtKB-UniRule"/>
</dbReference>
<dbReference type="CDD" id="cd00609">
    <property type="entry name" value="AAT_like"/>
    <property type="match status" value="1"/>
</dbReference>
<dbReference type="Gene3D" id="3.90.1150.10">
    <property type="entry name" value="Aspartate Aminotransferase, domain 1"/>
    <property type="match status" value="1"/>
</dbReference>
<dbReference type="Gene3D" id="3.40.640.10">
    <property type="entry name" value="Type I PLP-dependent aspartate aminotransferase-like (Major domain)"/>
    <property type="match status" value="1"/>
</dbReference>
<dbReference type="HAMAP" id="MF_01023">
    <property type="entry name" value="HisC_aminotrans_2"/>
    <property type="match status" value="1"/>
</dbReference>
<dbReference type="InterPro" id="IPR004839">
    <property type="entry name" value="Aminotransferase_I/II_large"/>
</dbReference>
<dbReference type="InterPro" id="IPR005861">
    <property type="entry name" value="HisP_aminotrans"/>
</dbReference>
<dbReference type="InterPro" id="IPR015424">
    <property type="entry name" value="PyrdxlP-dep_Trfase"/>
</dbReference>
<dbReference type="InterPro" id="IPR015421">
    <property type="entry name" value="PyrdxlP-dep_Trfase_major"/>
</dbReference>
<dbReference type="InterPro" id="IPR015422">
    <property type="entry name" value="PyrdxlP-dep_Trfase_small"/>
</dbReference>
<dbReference type="NCBIfam" id="TIGR01141">
    <property type="entry name" value="hisC"/>
    <property type="match status" value="1"/>
</dbReference>
<dbReference type="PANTHER" id="PTHR42885:SF2">
    <property type="entry name" value="HISTIDINOL-PHOSPHATE AMINOTRANSFERASE"/>
    <property type="match status" value="1"/>
</dbReference>
<dbReference type="PANTHER" id="PTHR42885">
    <property type="entry name" value="HISTIDINOL-PHOSPHATE AMINOTRANSFERASE-RELATED"/>
    <property type="match status" value="1"/>
</dbReference>
<dbReference type="Pfam" id="PF00155">
    <property type="entry name" value="Aminotran_1_2"/>
    <property type="match status" value="1"/>
</dbReference>
<dbReference type="SUPFAM" id="SSF53383">
    <property type="entry name" value="PLP-dependent transferases"/>
    <property type="match status" value="1"/>
</dbReference>
<keyword id="KW-0028">Amino-acid biosynthesis</keyword>
<keyword id="KW-0032">Aminotransferase</keyword>
<keyword id="KW-0368">Histidine biosynthesis</keyword>
<keyword id="KW-0663">Pyridoxal phosphate</keyword>
<keyword id="KW-1185">Reference proteome</keyword>
<keyword id="KW-0808">Transferase</keyword>
<comment type="catalytic activity">
    <reaction evidence="1">
        <text>L-histidinol phosphate + 2-oxoglutarate = 3-(imidazol-4-yl)-2-oxopropyl phosphate + L-glutamate</text>
        <dbReference type="Rhea" id="RHEA:23744"/>
        <dbReference type="ChEBI" id="CHEBI:16810"/>
        <dbReference type="ChEBI" id="CHEBI:29985"/>
        <dbReference type="ChEBI" id="CHEBI:57766"/>
        <dbReference type="ChEBI" id="CHEBI:57980"/>
        <dbReference type="EC" id="2.6.1.9"/>
    </reaction>
</comment>
<comment type="cofactor">
    <cofactor evidence="1">
        <name>pyridoxal 5'-phosphate</name>
        <dbReference type="ChEBI" id="CHEBI:597326"/>
    </cofactor>
</comment>
<comment type="pathway">
    <text evidence="1">Amino-acid biosynthesis; L-histidine biosynthesis; L-histidine from 5-phospho-alpha-D-ribose 1-diphosphate: step 7/9.</text>
</comment>
<comment type="subunit">
    <text evidence="1">Homodimer.</text>
</comment>
<comment type="similarity">
    <text evidence="1">Belongs to the class-II pyridoxal-phosphate-dependent aminotransferase family. Histidinol-phosphate aminotransferase subfamily.</text>
</comment>
<sequence>MKSVRSFIRDDIQAMSAYQIADVPPGFAKLDSMESPVHPFAGHETLLQEWQARLAAAPIHLYPNPSGSGLQEALRSAFDIPDCADIALGNGSDELIQFITMLTAKPGAAMLAAEPSFVMYRHNAALYGMDYVGVPLNGDFTLNLPAVLEAVRKHRPALTFIAYPNNPTGVCFTRAEIEAVIEASDGIVVVDEAYGAFNGDSFLPQAGRIPNLIVLRTLSKIGFAGLRIGYAAGCPEVIGELQKILPPYNMNQLSLTTAKLALRHYGIISANIDSLKNERERMFAELGKICRLNTFSSQANFITIRVPDADLLFDTLKQNRILVKKLHGAHPLLEHCLRITVGSPAQNDAVLNIIRQLYCQPTDFL</sequence>
<proteinExistence type="inferred from homology"/>
<protein>
    <recommendedName>
        <fullName evidence="1">Histidinol-phosphate aminotransferase</fullName>
        <ecNumber evidence="1">2.6.1.9</ecNumber>
    </recommendedName>
    <alternativeName>
        <fullName evidence="1">Imidazole acetol-phosphate transaminase</fullName>
    </alternativeName>
</protein>
<name>HIS8_NEIMB</name>
<feature type="chain" id="PRO_0000153400" description="Histidinol-phosphate aminotransferase">
    <location>
        <begin position="1"/>
        <end position="365"/>
    </location>
</feature>
<feature type="modified residue" description="N6-(pyridoxal phosphate)lysine" evidence="1">
    <location>
        <position position="220"/>
    </location>
</feature>
<evidence type="ECO:0000255" key="1">
    <source>
        <dbReference type="HAMAP-Rule" id="MF_01023"/>
    </source>
</evidence>
<reference key="1">
    <citation type="journal article" date="2000" name="Science">
        <title>Complete genome sequence of Neisseria meningitidis serogroup B strain MC58.</title>
        <authorList>
            <person name="Tettelin H."/>
            <person name="Saunders N.J."/>
            <person name="Heidelberg J.F."/>
            <person name="Jeffries A.C."/>
            <person name="Nelson K.E."/>
            <person name="Eisen J.A."/>
            <person name="Ketchum K.A."/>
            <person name="Hood D.W."/>
            <person name="Peden J.F."/>
            <person name="Dodson R.J."/>
            <person name="Nelson W.C."/>
            <person name="Gwinn M.L."/>
            <person name="DeBoy R.T."/>
            <person name="Peterson J.D."/>
            <person name="Hickey E.K."/>
            <person name="Haft D.H."/>
            <person name="Salzberg S.L."/>
            <person name="White O."/>
            <person name="Fleischmann R.D."/>
            <person name="Dougherty B.A."/>
            <person name="Mason T.M."/>
            <person name="Ciecko A."/>
            <person name="Parksey D.S."/>
            <person name="Blair E."/>
            <person name="Cittone H."/>
            <person name="Clark E.B."/>
            <person name="Cotton M.D."/>
            <person name="Utterback T.R."/>
            <person name="Khouri H.M."/>
            <person name="Qin H."/>
            <person name="Vamathevan J.J."/>
            <person name="Gill J."/>
            <person name="Scarlato V."/>
            <person name="Masignani V."/>
            <person name="Pizza M."/>
            <person name="Grandi G."/>
            <person name="Sun L."/>
            <person name="Smith H.O."/>
            <person name="Fraser C.M."/>
            <person name="Moxon E.R."/>
            <person name="Rappuoli R."/>
            <person name="Venter J.C."/>
        </authorList>
    </citation>
    <scope>NUCLEOTIDE SEQUENCE [LARGE SCALE GENOMIC DNA]</scope>
    <source>
        <strain>ATCC BAA-335 / MC58</strain>
    </source>
</reference>
<gene>
    <name evidence="1" type="primary">hisC</name>
    <name type="ordered locus">NMB1582</name>
</gene>